<gene>
    <name evidence="15" type="primary">SOAT2</name>
    <name type="synonym">ACACT2</name>
    <name type="synonym">ACAT2</name>
</gene>
<protein>
    <recommendedName>
        <fullName evidence="12">Sterol O-acyltransferase 2</fullName>
        <ecNumber evidence="9 13">2.3.1.26</ecNumber>
    </recommendedName>
    <alternativeName>
        <fullName>Acyl-coenzyme A:cholesterol acyltransferase 2</fullName>
        <shortName>ACAT-2</shortName>
    </alternativeName>
    <alternativeName>
        <fullName>Cholesterol acyltransferase 2</fullName>
    </alternativeName>
</protein>
<organism>
    <name type="scientific">Homo sapiens</name>
    <name type="common">Human</name>
    <dbReference type="NCBI Taxonomy" id="9606"/>
    <lineage>
        <taxon>Eukaryota</taxon>
        <taxon>Metazoa</taxon>
        <taxon>Chordata</taxon>
        <taxon>Craniata</taxon>
        <taxon>Vertebrata</taxon>
        <taxon>Euteleostomi</taxon>
        <taxon>Mammalia</taxon>
        <taxon>Eutheria</taxon>
        <taxon>Euarchontoglires</taxon>
        <taxon>Primates</taxon>
        <taxon>Haplorrhini</taxon>
        <taxon>Catarrhini</taxon>
        <taxon>Hominidae</taxon>
        <taxon>Homo</taxon>
    </lineage>
</organism>
<feature type="chain" id="PRO_0000207645" description="Sterol O-acyltransferase 2">
    <location>
        <begin position="1"/>
        <end position="522"/>
    </location>
</feature>
<feature type="topological domain" description="Cytoplasmic" evidence="12">
    <location>
        <begin position="1"/>
        <end position="120"/>
    </location>
</feature>
<feature type="transmembrane region" description="Helical; Name=1" evidence="2">
    <location>
        <begin position="121"/>
        <end position="142"/>
    </location>
</feature>
<feature type="topological domain" description="Lumenal" evidence="12">
    <location>
        <begin position="143"/>
        <end position="162"/>
    </location>
</feature>
<feature type="transmembrane region" description="Helical; Name=2" evidence="2">
    <location>
        <begin position="163"/>
        <end position="188"/>
    </location>
</feature>
<feature type="topological domain" description="Cytoplasmic" evidence="12">
    <location>
        <begin position="189"/>
        <end position="196"/>
    </location>
</feature>
<feature type="transmembrane region" description="Helical; Name=3" evidence="2">
    <location>
        <begin position="197"/>
        <end position="220"/>
    </location>
</feature>
<feature type="topological domain" description="Lumenal" evidence="12">
    <location>
        <begin position="221"/>
        <end position="228"/>
    </location>
</feature>
<feature type="transmembrane region" description="Helical; Name=4" evidence="2">
    <location>
        <begin position="229"/>
        <end position="252"/>
    </location>
</feature>
<feature type="topological domain" description="Cytoplasmic" evidence="12">
    <location>
        <begin position="253"/>
        <end position="293"/>
    </location>
</feature>
<feature type="transmembrane region" description="Helical; Name=5" evidence="2">
    <location>
        <begin position="294"/>
        <end position="326"/>
    </location>
</feature>
<feature type="topological domain" description="Lumenal" evidence="12">
    <location>
        <begin position="327"/>
        <end position="343"/>
    </location>
</feature>
<feature type="transmembrane region" description="Helical; Name=6" evidence="2">
    <location>
        <begin position="344"/>
        <end position="369"/>
    </location>
</feature>
<feature type="topological domain" description="Cytoplasmic" evidence="12">
    <location>
        <begin position="370"/>
        <end position="417"/>
    </location>
</feature>
<feature type="transmembrane region" description="Helical; Name=7" evidence="2">
    <location>
        <begin position="418"/>
        <end position="442"/>
    </location>
</feature>
<feature type="topological domain" description="Lumenal" evidence="12">
    <location>
        <begin position="443"/>
        <end position="448"/>
    </location>
</feature>
<feature type="transmembrane region" description="Helical; Name=8" evidence="2">
    <location>
        <begin position="449"/>
        <end position="464"/>
    </location>
</feature>
<feature type="topological domain" description="Cytoplasmic" evidence="12">
    <location>
        <begin position="465"/>
        <end position="470"/>
    </location>
</feature>
<feature type="transmembrane region" description="Helical; Name=9" evidence="2">
    <location>
        <begin position="471"/>
        <end position="502"/>
    </location>
</feature>
<feature type="topological domain" description="Lumenal" evidence="12">
    <location>
        <begin position="503"/>
        <end position="522"/>
    </location>
</feature>
<feature type="region of interest" description="Disordered" evidence="4">
    <location>
        <begin position="1"/>
        <end position="36"/>
    </location>
</feature>
<feature type="region of interest" description="Disordered" evidence="4">
    <location>
        <begin position="74"/>
        <end position="96"/>
    </location>
</feature>
<feature type="short sequence motif" description="FYXDWWN motif" evidence="2">
    <location>
        <begin position="377"/>
        <end position="383"/>
    </location>
</feature>
<feature type="compositionally biased region" description="Basic and acidic residues" evidence="4">
    <location>
        <begin position="17"/>
        <end position="36"/>
    </location>
</feature>
<feature type="active site" evidence="14">
    <location>
        <position position="434"/>
    </location>
</feature>
<feature type="binding site" evidence="2">
    <location>
        <position position="119"/>
    </location>
    <ligand>
        <name>cholesterol</name>
        <dbReference type="ChEBI" id="CHEBI:16113"/>
    </ligand>
</feature>
<feature type="binding site" evidence="2">
    <location>
        <position position="389"/>
    </location>
    <ligand>
        <name>an acyl-CoA</name>
        <dbReference type="ChEBI" id="CHEBI:58342"/>
    </ligand>
</feature>
<feature type="binding site" evidence="2">
    <location>
        <position position="392"/>
    </location>
    <ligand>
        <name>an acyl-CoA</name>
        <dbReference type="ChEBI" id="CHEBI:58342"/>
    </ligand>
</feature>
<feature type="binding site" evidence="2">
    <location>
        <position position="395"/>
    </location>
    <ligand>
        <name>an acyl-CoA</name>
        <dbReference type="ChEBI" id="CHEBI:58342"/>
    </ligand>
</feature>
<feature type="binding site" evidence="2">
    <location>
        <position position="399"/>
    </location>
    <ligand>
        <name>an acyl-CoA</name>
        <dbReference type="ChEBI" id="CHEBI:58342"/>
    </ligand>
</feature>
<feature type="binding site" evidence="2">
    <location>
        <position position="407"/>
    </location>
    <ligand>
        <name>an acyl-CoA</name>
        <dbReference type="ChEBI" id="CHEBI:58342"/>
    </ligand>
</feature>
<feature type="binding site" evidence="2">
    <location>
        <position position="430"/>
    </location>
    <ligand>
        <name>an acyl-CoA</name>
        <dbReference type="ChEBI" id="CHEBI:58342"/>
    </ligand>
</feature>
<feature type="modified residue" description="Cysteine sulfenic acid (-SOH); alternate" evidence="10">
    <location>
        <position position="277"/>
    </location>
</feature>
<feature type="cross-link" description="Glycyl cysteine thioester (Cys-Gly) (interchain with G-Cter in ubiquitin); alternate" evidence="10">
    <location>
        <position position="277"/>
    </location>
</feature>
<feature type="splice variant" id="VSP_057158" description="In isoform 3." evidence="8">
    <location>
        <begin position="93"/>
        <end position="148"/>
    </location>
</feature>
<feature type="splice variant" id="VSP_057159" description="In isoform 2." evidence="8">
    <location>
        <begin position="93"/>
        <end position="112"/>
    </location>
</feature>
<feature type="splice variant" id="VSP_057160" description="In isoform 3." evidence="8">
    <location>
        <begin position="236"/>
        <end position="261"/>
    </location>
</feature>
<feature type="splice variant" id="VSP_057161" description="In isoform 4." evidence="11">
    <original>TPYVRWNYVAKNFAQALGCVLY</original>
    <variation>PWDVCSMPASSWAASVFLSLPT</variation>
    <location>
        <begin position="289"/>
        <end position="310"/>
    </location>
</feature>
<feature type="splice variant" id="VSP_057162" description="In isoform 4." evidence="11">
    <location>
        <begin position="311"/>
        <end position="522"/>
    </location>
</feature>
<feature type="sequence variant" id="VAR_020373" description="In dbSNP:rs9658625." evidence="7">
    <original>E</original>
    <variation>G</variation>
    <location>
        <position position="14"/>
    </location>
</feature>
<feature type="sequence variant" id="VAR_020374" description="In dbSNP:rs2272296." evidence="5 7">
    <original>T</original>
    <variation>I</variation>
    <location>
        <position position="254"/>
    </location>
</feature>
<feature type="mutagenesis site" description="In K-null mutant; does not affect ubiquitination and sterol-regulated stabilization; when associated with R-80, R-100, R-102, R-108, R-242 and R-299." evidence="10">
    <original>K</original>
    <variation>R</variation>
    <location>
        <position position="49"/>
    </location>
</feature>
<feature type="mutagenesis site" description="In K-null mutant; does not affect ubiquitination and sterol-regulated stabilization; when associated with R-49, R-100, R-102, R-108, R-242 and R-299." evidence="10">
    <original>K</original>
    <variation>R</variation>
    <location>
        <position position="80"/>
    </location>
</feature>
<feature type="mutagenesis site" description="In K-null mutant; does not affect ubiquitination and sterol-regulated stabilization; when associated with R-49, R-80, R-102, R-108, R-242 and R-299." evidence="10">
    <original>K</original>
    <variation>R</variation>
    <location>
        <position position="100"/>
    </location>
</feature>
<feature type="mutagenesis site" description="In K-null mutant; does not affect ubiquitination and sterol-regulated stabilization; when associated with R-49, R-80, R-100, R-108, R-242 and R-299." evidence="10">
    <original>K</original>
    <variation>R</variation>
    <location>
        <position position="102"/>
    </location>
</feature>
<feature type="mutagenesis site" description="In K-null mutant; does not affect ubiquitination and sterol-regulated stabilization; when associated with R-49, R-80, R-100, R-102, R-242 and R-299." evidence="10">
    <original>K</original>
    <variation>R</variation>
    <location>
        <position position="108"/>
    </location>
</feature>
<feature type="mutagenesis site" description="In K-null mutant; does not affect ubiquitination and sterol-regulated stabilization; when associated with R-49, R-80, R-100, R-102, R-108 and R-299." evidence="10">
    <original>K</original>
    <variation>R</variation>
    <location>
        <position position="242"/>
    </location>
</feature>
<feature type="mutagenesis site" description="Does not affect ubiquitination and sterol-regulated stabilization; when associated with R-279." evidence="10">
    <original>T</original>
    <variation>A</variation>
    <location>
        <position position="254"/>
    </location>
</feature>
<feature type="mutagenesis site" description="Does not affect ubiquitination and sterol-regulated stabilization." evidence="10">
    <original>SFSS</original>
    <variation>AFAA</variation>
    <location>
        <begin position="267"/>
        <end position="270"/>
    </location>
</feature>
<feature type="mutagenesis site" description="Abolished ubiquitination and sterol-regulated stabilization." evidence="10">
    <original>C</original>
    <variation>A</variation>
    <location>
        <position position="277"/>
    </location>
</feature>
<feature type="mutagenesis site" description="Does not affect ubiquitination and sterol-regulated stabilization; when associated with R-54." evidence="10">
    <original>T</original>
    <variation>A</variation>
    <location>
        <position position="279"/>
    </location>
</feature>
<feature type="mutagenesis site" description="In K-null mutant; does not affect ubiquitination and sterol-regulated stabilization; when associated with R-49, R-80, R-100, R-102, R-108 and R-242." evidence="10">
    <original>K</original>
    <variation>R</variation>
    <location>
        <position position="299"/>
    </location>
</feature>
<feature type="mutagenesis site" description="Abolished cholesterol O-acyltransferase activity." evidence="9">
    <original>H</original>
    <variation>A</variation>
    <location>
        <position position="360"/>
    </location>
</feature>
<feature type="mutagenesis site" description="Abolished cholesterol O-acyltransferase activity." evidence="9">
    <original>H</original>
    <variation>A</variation>
    <location>
        <position position="399"/>
    </location>
</feature>
<feature type="sequence conflict" description="In Ref. 4; AAK48829." evidence="12" ref="4">
    <original>R</original>
    <variation>P</variation>
    <location>
        <position position="22"/>
    </location>
</feature>
<proteinExistence type="evidence at protein level"/>
<comment type="function">
    <text evidence="6 9">Catalyzes the formation of fatty acid-cholesterol esters, which are less soluble in membranes than cholesterol (PubMed:11294643, PubMed:16647063). Plays a role in lipoprotein assembly and dietary cholesterol absorption (PubMed:11294643). Utilizes oleoyl-CoA ((9Z)-octadecenoyl-CoA) and linolenoyl-CoA ((9Z,12Z,15Z)-octadecatrienoyl-CoA) as substrates (PubMed:11294643). May provide cholesteryl esters for lipoprotein secretion from hepatocytes and intestinal mucosa (PubMed:11294643).</text>
</comment>
<comment type="function">
    <molecule>Isoform 2</molecule>
    <text evidence="8">Has lower enzymatic activity compared to isoform 1.</text>
</comment>
<comment type="function">
    <molecule>Isoform 3</molecule>
    <text evidence="8">Has lower enzymatic activity compared to isoform 1.</text>
</comment>
<comment type="catalytic activity">
    <reaction evidence="9 13">
        <text>a sterol + a long-chain fatty acyl-CoA = a long-chain 3-hydroxysterol ester + CoA</text>
        <dbReference type="Rhea" id="RHEA:59816"/>
        <dbReference type="ChEBI" id="CHEBI:15889"/>
        <dbReference type="ChEBI" id="CHEBI:57287"/>
        <dbReference type="ChEBI" id="CHEBI:83139"/>
        <dbReference type="ChEBI" id="CHEBI:232093"/>
        <dbReference type="EC" id="2.3.1.26"/>
    </reaction>
    <physiologicalReaction direction="left-to-right" evidence="9 13">
        <dbReference type="Rhea" id="RHEA:59817"/>
    </physiologicalReaction>
</comment>
<comment type="catalytic activity">
    <reaction evidence="9 13">
        <text>cholesterol + an acyl-CoA = a cholesterol ester + CoA</text>
        <dbReference type="Rhea" id="RHEA:17729"/>
        <dbReference type="ChEBI" id="CHEBI:16113"/>
        <dbReference type="ChEBI" id="CHEBI:17002"/>
        <dbReference type="ChEBI" id="CHEBI:57287"/>
        <dbReference type="ChEBI" id="CHEBI:58342"/>
    </reaction>
    <physiologicalReaction direction="left-to-right" evidence="9 13">
        <dbReference type="Rhea" id="RHEA:17730"/>
    </physiologicalReaction>
</comment>
<comment type="catalytic activity">
    <reaction evidence="6">
        <text>cholesterol + (9Z)-octadecenoyl-CoA = cholesteryl (9Z-octadecenoate) + CoA</text>
        <dbReference type="Rhea" id="RHEA:41436"/>
        <dbReference type="ChEBI" id="CHEBI:16113"/>
        <dbReference type="ChEBI" id="CHEBI:46898"/>
        <dbReference type="ChEBI" id="CHEBI:57287"/>
        <dbReference type="ChEBI" id="CHEBI:57387"/>
    </reaction>
    <physiologicalReaction direction="left-to-right" evidence="13">
        <dbReference type="Rhea" id="RHEA:41437"/>
    </physiologicalReaction>
</comment>
<comment type="catalytic activity">
    <reaction evidence="6">
        <text>(5Z,8Z,11Z,14Z,17Z)-eicosapentaenoyl-CoA + cholesterol = (5Z,8Z,11Z,14Z,17Z-eicosapentaenoyl)-cholesterol + CoA</text>
        <dbReference type="Rhea" id="RHEA:46612"/>
        <dbReference type="ChEBI" id="CHEBI:16113"/>
        <dbReference type="ChEBI" id="CHEBI:57287"/>
        <dbReference type="ChEBI" id="CHEBI:73862"/>
        <dbReference type="ChEBI" id="CHEBI:84969"/>
    </reaction>
    <physiologicalReaction direction="left-to-right" evidence="13">
        <dbReference type="Rhea" id="RHEA:46613"/>
    </physiologicalReaction>
</comment>
<comment type="catalytic activity">
    <reaction evidence="6">
        <text>(9Z,12Z,15Z)-octadecatrienoyl-CoA + cholesterol = (9Z,12Z,15Z-octadecatrienoyl)-cholesterol + CoA</text>
        <dbReference type="Rhea" id="RHEA:46620"/>
        <dbReference type="ChEBI" id="CHEBI:16113"/>
        <dbReference type="ChEBI" id="CHEBI:57287"/>
        <dbReference type="ChEBI" id="CHEBI:74034"/>
        <dbReference type="ChEBI" id="CHEBI:84341"/>
    </reaction>
    <physiologicalReaction direction="left-to-right" evidence="13">
        <dbReference type="Rhea" id="RHEA:46621"/>
    </physiologicalReaction>
</comment>
<comment type="catalytic activity">
    <reaction evidence="6">
        <text>(5Z,8Z,11Z,14Z)-eicosatetraenoyl-CoA + cholesterol = cholesteryl (5Z,8Z,11Z,14Z)-eicosatetraenoate + CoA</text>
        <dbReference type="Rhea" id="RHEA:42816"/>
        <dbReference type="ChEBI" id="CHEBI:16113"/>
        <dbReference type="ChEBI" id="CHEBI:57287"/>
        <dbReference type="ChEBI" id="CHEBI:57368"/>
        <dbReference type="ChEBI" id="CHEBI:82751"/>
    </reaction>
    <physiologicalReaction direction="left-to-right" evidence="13">
        <dbReference type="Rhea" id="RHEA:42817"/>
    </physiologicalReaction>
</comment>
<comment type="subunit">
    <text evidence="2 10">May form homo- or heterodimers (By similarity). Interacts with INSIG1; the interaction is direct and promotes association with AMFR/gp78 (PubMed:28604676).</text>
</comment>
<comment type="interaction">
    <interactant intactId="EBI-9055438">
        <id>O75908</id>
    </interactant>
    <interactant intactId="EBI-1045825">
        <id>P55061</id>
        <label>TMBIM6</label>
    </interactant>
    <organismsDiffer>false</organismsDiffer>
    <experiments>3</experiments>
</comment>
<comment type="subcellular location">
    <subcellularLocation>
        <location evidence="1">Endoplasmic reticulum membrane</location>
        <topology evidence="3">Multi-pass membrane protein</topology>
    </subcellularLocation>
</comment>
<comment type="alternative products">
    <event type="alternative splicing"/>
    <isoform>
        <id>O75908-1</id>
        <name>1</name>
        <name>ACAD2a</name>
        <sequence type="displayed"/>
    </isoform>
    <isoform>
        <id>O75908-2</id>
        <name>2</name>
        <name>ACAD2b</name>
        <sequence type="described" ref="VSP_057159"/>
    </isoform>
    <isoform>
        <id>O75908-3</id>
        <name>3</name>
        <name>ACAD2c</name>
        <sequence type="described" ref="VSP_057158 VSP_057160"/>
    </isoform>
    <isoform>
        <id>O75908-4</id>
        <name>4</name>
        <sequence type="described" ref="VSP_057161 VSP_057162"/>
    </isoform>
</comment>
<comment type="tissue specificity">
    <text evidence="8">Expression seems confined in hepatocytes and enterocytes.</text>
</comment>
<comment type="domain">
    <text evidence="2">Each protomer consists of 9 transmembrane segments, which enclose a cytosolic tunnel and a transmembrane tunnel that converge at the predicted catalytic site: acyl-CoA enters the active site through the cytosolic tunnel, whereas cholesterol enters from the side through the transmembrane tunnel.</text>
</comment>
<comment type="PTM">
    <text evidence="10">Polyubiquitinated by AMFR/gp78 at Cys-277, leading to its degradation when the lipid levels are low (PubMed:28604676). Association with AMFR/gp78 is mediated via interaction with INSIG1 (PubMed:28604676). High concentration of cholesterol and fatty acid results in Cys-277 oxidation, preventing ubiquitination at the same site, resulting in protein stabilization (PubMed:28604676).</text>
</comment>
<comment type="PTM">
    <text evidence="10">Oxidized at Cys-277: high concentration of cholesterol and fatty acid induce reactive oxygen species, which oxidizes Cys-277, preventing ubiquitination at the same site, and resulting in protein stabilization.</text>
</comment>
<comment type="similarity">
    <text evidence="12">Belongs to the membrane-bound acyltransferase family. Sterol o-acyltransferase subfamily.</text>
</comment>
<reference key="1">
    <citation type="journal article" date="1998" name="J. Biol. Chem.">
        <title>Characterization of two human genes encoding acyl coenzyme A:cholesterol acyltransferase-related enzymes.</title>
        <authorList>
            <person name="Oelkers P."/>
            <person name="Behari A."/>
            <person name="Cromley D."/>
            <person name="Billheimer J.T."/>
            <person name="Sturley S.L."/>
        </authorList>
    </citation>
    <scope>NUCLEOTIDE SEQUENCE [MRNA] (ISOFORM 1)</scope>
</reference>
<reference key="2">
    <citation type="journal article" date="2000" name="J. Biol. Chem.">
        <title>Immunological quantitation and localization of ACAT-1 and ACAT-2 in human liver and small intestine.</title>
        <authorList>
            <person name="Chang C.C.Y."/>
            <person name="Sakashita N."/>
            <person name="Ornvold K."/>
            <person name="Lee O."/>
            <person name="Chang E.T."/>
            <person name="Dong R."/>
            <person name="Lin S."/>
            <person name="Lee C.-Y.G."/>
            <person name="Strom S.C."/>
            <person name="Kashyap R."/>
            <person name="Fung J.J."/>
            <person name="Farese R.V. Jr."/>
            <person name="Patoiseau J.-F."/>
            <person name="Delhon A."/>
            <person name="Chang T.-Y."/>
        </authorList>
    </citation>
    <scope>NUCLEOTIDE SEQUENCE [MRNA] (ISOFORM 1)</scope>
    <scope>VARIANT ILE-254</scope>
    <source>
        <tissue>Intestine</tissue>
    </source>
</reference>
<reference key="3">
    <citation type="journal article" date="2001" name="Biochim. Biophys. Acta">
        <title>Structure of the human acyl-CoA:cholesterol acyltransferase-2 (ACAT-2) gene and its relation to dyslipidemia.</title>
        <authorList>
            <person name="Katsuren K."/>
            <person name="Tamura T."/>
            <person name="Arashiro R."/>
            <person name="Takata K."/>
            <person name="Matsuura T."/>
            <person name="Niikawa N."/>
            <person name="Ohta T."/>
        </authorList>
    </citation>
    <scope>NUCLEOTIDE SEQUENCE [GENOMIC DNA]</scope>
</reference>
<reference key="4">
    <citation type="journal article" date="2001" name="Biochem. Biophys. Res. Commun.">
        <title>Organization of human ACAT-2 gene and its cell-type-specific promoter activity.</title>
        <authorList>
            <person name="Song B.L."/>
            <person name="Qi W."/>
            <person name="Yang X.Y."/>
            <person name="Chang C.C.Y."/>
            <person name="Zhu J.Q."/>
            <person name="Chang T.Y."/>
            <person name="Li B.L."/>
        </authorList>
    </citation>
    <scope>NUCLEOTIDE SEQUENCE [GENOMIC DNA]</scope>
</reference>
<reference key="5">
    <citation type="journal article" date="2006" name="Nature">
        <title>The finished DNA sequence of human chromosome 12.</title>
        <authorList>
            <person name="Scherer S.E."/>
            <person name="Muzny D.M."/>
            <person name="Buhay C.J."/>
            <person name="Chen R."/>
            <person name="Cree A."/>
            <person name="Ding Y."/>
            <person name="Dugan-Rocha S."/>
            <person name="Gill R."/>
            <person name="Gunaratne P."/>
            <person name="Harris R.A."/>
            <person name="Hawes A.C."/>
            <person name="Hernandez J."/>
            <person name="Hodgson A.V."/>
            <person name="Hume J."/>
            <person name="Jackson A."/>
            <person name="Khan Z.M."/>
            <person name="Kovar-Smith C."/>
            <person name="Lewis L.R."/>
            <person name="Lozado R.J."/>
            <person name="Metzker M.L."/>
            <person name="Milosavljevic A."/>
            <person name="Miner G.R."/>
            <person name="Montgomery K.T."/>
            <person name="Morgan M.B."/>
            <person name="Nazareth L.V."/>
            <person name="Scott G."/>
            <person name="Sodergren E."/>
            <person name="Song X.-Z."/>
            <person name="Steffen D."/>
            <person name="Lovering R.C."/>
            <person name="Wheeler D.A."/>
            <person name="Worley K.C."/>
            <person name="Yuan Y."/>
            <person name="Zhang Z."/>
            <person name="Adams C.Q."/>
            <person name="Ansari-Lari M.A."/>
            <person name="Ayele M."/>
            <person name="Brown M.J."/>
            <person name="Chen G."/>
            <person name="Chen Z."/>
            <person name="Clerc-Blankenburg K.P."/>
            <person name="Davis C."/>
            <person name="Delgado O."/>
            <person name="Dinh H.H."/>
            <person name="Draper H."/>
            <person name="Gonzalez-Garay M.L."/>
            <person name="Havlak P."/>
            <person name="Jackson L.R."/>
            <person name="Jacob L.S."/>
            <person name="Kelly S.H."/>
            <person name="Li L."/>
            <person name="Li Z."/>
            <person name="Liu J."/>
            <person name="Liu W."/>
            <person name="Lu J."/>
            <person name="Maheshwari M."/>
            <person name="Nguyen B.-V."/>
            <person name="Okwuonu G.O."/>
            <person name="Pasternak S."/>
            <person name="Perez L.M."/>
            <person name="Plopper F.J.H."/>
            <person name="Santibanez J."/>
            <person name="Shen H."/>
            <person name="Tabor P.E."/>
            <person name="Verduzco D."/>
            <person name="Waldron L."/>
            <person name="Wang Q."/>
            <person name="Williams G.A."/>
            <person name="Zhang J."/>
            <person name="Zhou J."/>
            <person name="Allen C.C."/>
            <person name="Amin A.G."/>
            <person name="Anyalebechi V."/>
            <person name="Bailey M."/>
            <person name="Barbaria J.A."/>
            <person name="Bimage K.E."/>
            <person name="Bryant N.P."/>
            <person name="Burch P.E."/>
            <person name="Burkett C.E."/>
            <person name="Burrell K.L."/>
            <person name="Calderon E."/>
            <person name="Cardenas V."/>
            <person name="Carter K."/>
            <person name="Casias K."/>
            <person name="Cavazos I."/>
            <person name="Cavazos S.R."/>
            <person name="Ceasar H."/>
            <person name="Chacko J."/>
            <person name="Chan S.N."/>
            <person name="Chavez D."/>
            <person name="Christopoulos C."/>
            <person name="Chu J."/>
            <person name="Cockrell R."/>
            <person name="Cox C.D."/>
            <person name="Dang M."/>
            <person name="Dathorne S.R."/>
            <person name="David R."/>
            <person name="Davis C.M."/>
            <person name="Davy-Carroll L."/>
            <person name="Deshazo D.R."/>
            <person name="Donlin J.E."/>
            <person name="D'Souza L."/>
            <person name="Eaves K.A."/>
            <person name="Egan A."/>
            <person name="Emery-Cohen A.J."/>
            <person name="Escotto M."/>
            <person name="Flagg N."/>
            <person name="Forbes L.D."/>
            <person name="Gabisi A.M."/>
            <person name="Garza M."/>
            <person name="Hamilton C."/>
            <person name="Henderson N."/>
            <person name="Hernandez O."/>
            <person name="Hines S."/>
            <person name="Hogues M.E."/>
            <person name="Huang M."/>
            <person name="Idlebird D.G."/>
            <person name="Johnson R."/>
            <person name="Jolivet A."/>
            <person name="Jones S."/>
            <person name="Kagan R."/>
            <person name="King L.M."/>
            <person name="Leal B."/>
            <person name="Lebow H."/>
            <person name="Lee S."/>
            <person name="LeVan J.M."/>
            <person name="Lewis L.C."/>
            <person name="London P."/>
            <person name="Lorensuhewa L.M."/>
            <person name="Loulseged H."/>
            <person name="Lovett D.A."/>
            <person name="Lucier A."/>
            <person name="Lucier R.L."/>
            <person name="Ma J."/>
            <person name="Madu R.C."/>
            <person name="Mapua P."/>
            <person name="Martindale A.D."/>
            <person name="Martinez E."/>
            <person name="Massey E."/>
            <person name="Mawhiney S."/>
            <person name="Meador M.G."/>
            <person name="Mendez S."/>
            <person name="Mercado C."/>
            <person name="Mercado I.C."/>
            <person name="Merritt C.E."/>
            <person name="Miner Z.L."/>
            <person name="Minja E."/>
            <person name="Mitchell T."/>
            <person name="Mohabbat F."/>
            <person name="Mohabbat K."/>
            <person name="Montgomery B."/>
            <person name="Moore N."/>
            <person name="Morris S."/>
            <person name="Munidasa M."/>
            <person name="Ngo R.N."/>
            <person name="Nguyen N.B."/>
            <person name="Nickerson E."/>
            <person name="Nwaokelemeh O.O."/>
            <person name="Nwokenkwo S."/>
            <person name="Obregon M."/>
            <person name="Oguh M."/>
            <person name="Oragunye N."/>
            <person name="Oviedo R.J."/>
            <person name="Parish B.J."/>
            <person name="Parker D.N."/>
            <person name="Parrish J."/>
            <person name="Parks K.L."/>
            <person name="Paul H.A."/>
            <person name="Payton B.A."/>
            <person name="Perez A."/>
            <person name="Perrin W."/>
            <person name="Pickens A."/>
            <person name="Primus E.L."/>
            <person name="Pu L.-L."/>
            <person name="Puazo M."/>
            <person name="Quiles M.M."/>
            <person name="Quiroz J.B."/>
            <person name="Rabata D."/>
            <person name="Reeves K."/>
            <person name="Ruiz S.J."/>
            <person name="Shao H."/>
            <person name="Sisson I."/>
            <person name="Sonaike T."/>
            <person name="Sorelle R.P."/>
            <person name="Sutton A.E."/>
            <person name="Svatek A.F."/>
            <person name="Svetz L.A."/>
            <person name="Tamerisa K.S."/>
            <person name="Taylor T.R."/>
            <person name="Teague B."/>
            <person name="Thomas N."/>
            <person name="Thorn R.D."/>
            <person name="Trejos Z.Y."/>
            <person name="Trevino B.K."/>
            <person name="Ukegbu O.N."/>
            <person name="Urban J.B."/>
            <person name="Vasquez L.I."/>
            <person name="Vera V.A."/>
            <person name="Villasana D.M."/>
            <person name="Wang L."/>
            <person name="Ward-Moore S."/>
            <person name="Warren J.T."/>
            <person name="Wei X."/>
            <person name="White F."/>
            <person name="Williamson A.L."/>
            <person name="Wleczyk R."/>
            <person name="Wooden H.S."/>
            <person name="Wooden S.H."/>
            <person name="Yen J."/>
            <person name="Yoon L."/>
            <person name="Yoon V."/>
            <person name="Zorrilla S.E."/>
            <person name="Nelson D."/>
            <person name="Kucherlapati R."/>
            <person name="Weinstock G."/>
            <person name="Gibbs R.A."/>
        </authorList>
    </citation>
    <scope>NUCLEOTIDE SEQUENCE [LARGE SCALE GENOMIC DNA]</scope>
</reference>
<reference key="6">
    <citation type="journal article" date="2004" name="Genome Res.">
        <title>The status, quality, and expansion of the NIH full-length cDNA project: the Mammalian Gene Collection (MGC).</title>
        <authorList>
            <consortium name="The MGC Project Team"/>
        </authorList>
    </citation>
    <scope>NUCLEOTIDE SEQUENCE [LARGE SCALE MRNA] (ISOFORMS 1 AND 4)</scope>
    <scope>VARIANTS GLY-14 AND ILE-254</scope>
</reference>
<reference key="7">
    <citation type="journal article" date="2006" name="FEBS Lett.">
        <title>A critical role for the histidine residues in the catalytic function of acyl-CoA:cholesterol acyltransferase catalysis: evidence for catalytic difference between ACAT1 and ACAT2.</title>
        <authorList>
            <person name="An S."/>
            <person name="Cho K.H."/>
            <person name="Lee W.S."/>
            <person name="Lee J.O."/>
            <person name="Paik Y.K."/>
            <person name="Jeong T.S."/>
        </authorList>
    </citation>
    <scope>FUNCTION</scope>
    <scope>CATALYTIC ACTIVITY</scope>
    <scope>ACTIVE SITE</scope>
    <scope>MUTAGENESIS OF HIS-360 AND HIS-399</scope>
</reference>
<reference key="8">
    <citation type="journal article" date="2001" name="Biochemistry">
        <title>Differential modulation of ACAT1 and ACAT2 transcription and activity by long chain free fatty acids in cultured cells.</title>
        <authorList>
            <person name="Seo T."/>
            <person name="Oelkers P.M."/>
            <person name="Giattina M.R."/>
            <person name="Worgall T.S."/>
            <person name="Sturley S.L."/>
            <person name="Deckelbaum R.J."/>
        </authorList>
    </citation>
    <scope>CATALYTIC ACTIVITY</scope>
    <scope>FUNCTION</scope>
</reference>
<reference key="9">
    <citation type="journal article" date="2005" name="Acta Biochim. Biophys. Sin.">
        <title>Two human ACAT2 mRNA variants produced by alternative splicing and coding for novel isoenzymes.</title>
        <authorList>
            <person name="Yao X.M."/>
            <person name="Wang C.H."/>
            <person name="Song B.L."/>
            <person name="Yang X.Y."/>
            <person name="Wang Z.Z."/>
            <person name="Qi W."/>
            <person name="Lin Z.X."/>
            <person name="Chang C.C."/>
            <person name="Chang T.Y."/>
            <person name="Li B.L."/>
        </authorList>
    </citation>
    <scope>TISSUE SPECIFICITY</scope>
    <scope>FUNCTION (ISOFORMS 2 AND 3)</scope>
    <scope>ALTERNATIVE SPLICING (ISOFORMS 2 AND 3)</scope>
</reference>
<reference key="10">
    <citation type="journal article" date="2017" name="Nat. Cell Biol.">
        <title>Cholesterol and fatty acids regulate cysteine ubiquitylation of ACAT2 through competitive oxidation.</title>
        <authorList>
            <person name="Wang Y.J."/>
            <person name="Bian Y."/>
            <person name="Luo J."/>
            <person name="Lu M."/>
            <person name="Xiong Y."/>
            <person name="Guo S.Y."/>
            <person name="Yin H.Y."/>
            <person name="Lin X."/>
            <person name="Li Q."/>
            <person name="Chang C.C.Y."/>
            <person name="Chang T.Y."/>
            <person name="Li B.L."/>
            <person name="Song B.L."/>
        </authorList>
    </citation>
    <scope>INTERACTION WITH INSIG1</scope>
    <scope>UBIQUITINATION AT CYS-277</scope>
    <scope>OXIDATION AT CYS-277</scope>
    <scope>MUTAGENESIS OF LYS-49; LYS-80; LYS-100; LYS-102; LYS-108; LYS-242; THR-254; 267-SER--SER-270; CYS-277; THR-279 AND LYS-299</scope>
</reference>
<reference key="11">
    <citation type="journal article" date="2017" name="Nat. Cell Biol.">
        <title>Corrigendum: Cholesterol and fatty acids regulate cysteine ubiquitylation of ACAT2 through competitive oxidation.</title>
        <authorList>
            <person name="Wang Y.J."/>
            <person name="Bian Y."/>
            <person name="Luo J."/>
            <person name="Lu M."/>
            <person name="Xiong Y."/>
            <person name="Guo S.Y."/>
            <person name="Yong H."/>
            <person name="Lin X."/>
            <person name="Li Q."/>
            <person name="Chang C.C.Y."/>
            <person name="Chang T.Y."/>
            <person name="Li B.L."/>
            <person name="Song B.L."/>
        </authorList>
    </citation>
    <scope>ERRATUM OF PUBMED:28604676</scope>
</reference>
<evidence type="ECO:0000250" key="1">
    <source>
        <dbReference type="UniProtKB" id="O88908"/>
    </source>
</evidence>
<evidence type="ECO:0000250" key="2">
    <source>
        <dbReference type="UniProtKB" id="P35610"/>
    </source>
</evidence>
<evidence type="ECO:0000255" key="3"/>
<evidence type="ECO:0000256" key="4">
    <source>
        <dbReference type="SAM" id="MobiDB-lite"/>
    </source>
</evidence>
<evidence type="ECO:0000269" key="5">
    <source>
    </source>
</evidence>
<evidence type="ECO:0000269" key="6">
    <source>
    </source>
</evidence>
<evidence type="ECO:0000269" key="7">
    <source>
    </source>
</evidence>
<evidence type="ECO:0000269" key="8">
    <source>
    </source>
</evidence>
<evidence type="ECO:0000269" key="9">
    <source>
    </source>
</evidence>
<evidence type="ECO:0000269" key="10">
    <source>
    </source>
</evidence>
<evidence type="ECO:0000303" key="11">
    <source>
    </source>
</evidence>
<evidence type="ECO:0000305" key="12"/>
<evidence type="ECO:0000305" key="13">
    <source>
    </source>
</evidence>
<evidence type="ECO:0000305" key="14">
    <source>
    </source>
</evidence>
<evidence type="ECO:0000312" key="15">
    <source>
        <dbReference type="HGNC" id="HGNC:11178"/>
    </source>
</evidence>
<keyword id="KW-0002">3D-structure</keyword>
<keyword id="KW-0012">Acyltransferase</keyword>
<keyword id="KW-0025">Alternative splicing</keyword>
<keyword id="KW-0153">Cholesterol metabolism</keyword>
<keyword id="KW-0256">Endoplasmic reticulum</keyword>
<keyword id="KW-0443">Lipid metabolism</keyword>
<keyword id="KW-0472">Membrane</keyword>
<keyword id="KW-0558">Oxidation</keyword>
<keyword id="KW-1267">Proteomics identification</keyword>
<keyword id="KW-1185">Reference proteome</keyword>
<keyword id="KW-0753">Steroid metabolism</keyword>
<keyword id="KW-1207">Sterol metabolism</keyword>
<keyword id="KW-0882">Thioester bond</keyword>
<keyword id="KW-0808">Transferase</keyword>
<keyword id="KW-0812">Transmembrane</keyword>
<keyword id="KW-1133">Transmembrane helix</keyword>
<keyword id="KW-0832">Ubl conjugation</keyword>
<sequence length="522" mass="59896">MEPGGARLRLQRTEGLGGERERQPCGDGNTETHRAPDLVQWTRHMEAVKAQLLEQAQGQLRELLDRAMREAIQSYPSQDKPLPPPPPGSLSRTQEPSLGKQKVFIIRKSLLDELMEVQHFRTIYHMFIAGLCVFIISTLAIDFIDEGRLLLEFDLLIFSFGQLPLALVTWVPMFLSTLLAPYQALRLWARGTWTQATGLGCALLAAHAVVLCALPVHVAVEHQLPPASRCVLVFEQVRFLMKSYSFLREAVPGTLRARRGEGIQAPSFSSYLYFLFCPTLIYRETYPRTPYVRWNYVAKNFAQALGCVLYACFILGRLCVPVFANMSREPFSTRALVLSILHATLPGIFMLLLIFFAFLHCWLNAFAEMLRFGDRMFYRDWWNSTSFSNYYRTWNVVVHDWLYSYVYQDGLRLLGARARGVAMLGVFLVSAVAHEYIFCFVLGFFYPVMLILFLVIGGMLNFMMHDQRTGPAWNVLMWTMLFLGQGIQVSLYCQEWYARRHCPLPQATFWGLVTPRSWSCHT</sequence>
<name>SOAT2_HUMAN</name>
<dbReference type="EC" id="2.3.1.26" evidence="9 13"/>
<dbReference type="EMBL" id="AF059203">
    <property type="protein sequence ID" value="AAC63998.1"/>
    <property type="molecule type" value="mRNA"/>
</dbReference>
<dbReference type="EMBL" id="AF099031">
    <property type="protein sequence ID" value="AAC78335.2"/>
    <property type="molecule type" value="mRNA"/>
</dbReference>
<dbReference type="EMBL" id="AF331516">
    <property type="protein sequence ID" value="AAK18275.1"/>
    <property type="molecule type" value="Genomic_DNA"/>
</dbReference>
<dbReference type="EMBL" id="AF331502">
    <property type="protein sequence ID" value="AAK18275.1"/>
    <property type="status" value="JOINED"/>
    <property type="molecule type" value="Genomic_DNA"/>
</dbReference>
<dbReference type="EMBL" id="AF331503">
    <property type="protein sequence ID" value="AAK18275.1"/>
    <property type="status" value="JOINED"/>
    <property type="molecule type" value="Genomic_DNA"/>
</dbReference>
<dbReference type="EMBL" id="AF331504">
    <property type="protein sequence ID" value="AAK18275.1"/>
    <property type="status" value="JOINED"/>
    <property type="molecule type" value="Genomic_DNA"/>
</dbReference>
<dbReference type="EMBL" id="AF331505">
    <property type="protein sequence ID" value="AAK18275.1"/>
    <property type="status" value="JOINED"/>
    <property type="molecule type" value="Genomic_DNA"/>
</dbReference>
<dbReference type="EMBL" id="AF331506">
    <property type="protein sequence ID" value="AAK18275.1"/>
    <property type="status" value="JOINED"/>
    <property type="molecule type" value="Genomic_DNA"/>
</dbReference>
<dbReference type="EMBL" id="AF331507">
    <property type="protein sequence ID" value="AAK18275.1"/>
    <property type="status" value="JOINED"/>
    <property type="molecule type" value="Genomic_DNA"/>
</dbReference>
<dbReference type="EMBL" id="AF331508">
    <property type="protein sequence ID" value="AAK18275.1"/>
    <property type="status" value="JOINED"/>
    <property type="molecule type" value="Genomic_DNA"/>
</dbReference>
<dbReference type="EMBL" id="AF331509">
    <property type="protein sequence ID" value="AAK18275.1"/>
    <property type="status" value="JOINED"/>
    <property type="molecule type" value="Genomic_DNA"/>
</dbReference>
<dbReference type="EMBL" id="AF331510">
    <property type="protein sequence ID" value="AAK18275.1"/>
    <property type="status" value="JOINED"/>
    <property type="molecule type" value="Genomic_DNA"/>
</dbReference>
<dbReference type="EMBL" id="AF331511">
    <property type="protein sequence ID" value="AAK18275.1"/>
    <property type="status" value="JOINED"/>
    <property type="molecule type" value="Genomic_DNA"/>
</dbReference>
<dbReference type="EMBL" id="AF331512">
    <property type="protein sequence ID" value="AAK18275.1"/>
    <property type="status" value="JOINED"/>
    <property type="molecule type" value="Genomic_DNA"/>
</dbReference>
<dbReference type="EMBL" id="AF331513">
    <property type="protein sequence ID" value="AAK18275.1"/>
    <property type="status" value="JOINED"/>
    <property type="molecule type" value="Genomic_DNA"/>
</dbReference>
<dbReference type="EMBL" id="AF331514">
    <property type="protein sequence ID" value="AAK18275.1"/>
    <property type="status" value="JOINED"/>
    <property type="molecule type" value="Genomic_DNA"/>
</dbReference>
<dbReference type="EMBL" id="AF331515">
    <property type="protein sequence ID" value="AAK18275.1"/>
    <property type="status" value="JOINED"/>
    <property type="molecule type" value="Genomic_DNA"/>
</dbReference>
<dbReference type="EMBL" id="AF332858">
    <property type="protein sequence ID" value="AAK48829.1"/>
    <property type="molecule type" value="Genomic_DNA"/>
</dbReference>
<dbReference type="EMBL" id="AF332857">
    <property type="protein sequence ID" value="AAK48829.1"/>
    <property type="status" value="JOINED"/>
    <property type="molecule type" value="Genomic_DNA"/>
</dbReference>
<dbReference type="EMBL" id="AC073573">
    <property type="status" value="NOT_ANNOTATED_CDS"/>
    <property type="molecule type" value="Genomic_DNA"/>
</dbReference>
<dbReference type="EMBL" id="BC096090">
    <property type="protein sequence ID" value="AAH96090.1"/>
    <property type="molecule type" value="mRNA"/>
</dbReference>
<dbReference type="EMBL" id="BC096091">
    <property type="protein sequence ID" value="AAH96091.1"/>
    <property type="molecule type" value="mRNA"/>
</dbReference>
<dbReference type="EMBL" id="BC096092">
    <property type="protein sequence ID" value="AAH96092.1"/>
    <property type="molecule type" value="mRNA"/>
</dbReference>
<dbReference type="EMBL" id="BC099626">
    <property type="protein sequence ID" value="AAH99626.1"/>
    <property type="molecule type" value="mRNA"/>
</dbReference>
<dbReference type="CCDS" id="CCDS8847.1">
    <molecule id="O75908-1"/>
</dbReference>
<dbReference type="RefSeq" id="NP_003569.1">
    <molecule id="O75908-1"/>
    <property type="nucleotide sequence ID" value="NM_003578.4"/>
</dbReference>
<dbReference type="PDB" id="7N6Q">
    <property type="method" value="EM"/>
    <property type="resolution" value="3.87 A"/>
    <property type="chains" value="A/B/C/D=2-522"/>
</dbReference>
<dbReference type="PDB" id="7N6R">
    <property type="method" value="EM"/>
    <property type="resolution" value="3.93 A"/>
    <property type="chains" value="A/B/C/D=2-522"/>
</dbReference>
<dbReference type="PDBsum" id="7N6Q"/>
<dbReference type="PDBsum" id="7N6R"/>
<dbReference type="EMDB" id="EMD-24208"/>
<dbReference type="EMDB" id="EMD-24209"/>
<dbReference type="SMR" id="O75908"/>
<dbReference type="BioGRID" id="114015">
    <property type="interactions" value="6"/>
</dbReference>
<dbReference type="FunCoup" id="O75908">
    <property type="interactions" value="155"/>
</dbReference>
<dbReference type="IntAct" id="O75908">
    <property type="interactions" value="7"/>
</dbReference>
<dbReference type="MINT" id="O75908"/>
<dbReference type="STRING" id="9606.ENSP00000301466"/>
<dbReference type="BindingDB" id="O75908"/>
<dbReference type="ChEMBL" id="CHEMBL4465"/>
<dbReference type="DrugBank" id="DB01094">
    <property type="generic name" value="Hesperetin"/>
</dbReference>
<dbReference type="DrugBank" id="DB16254">
    <property type="generic name" value="Nevanimibe"/>
</dbReference>
<dbReference type="SwissLipids" id="SLP:000001262">
    <molecule id="O75908-1"/>
</dbReference>
<dbReference type="TCDB" id="2.A.50.4.11">
    <property type="family name" value="the glycerol uptake (gup) or membrane-bound acyl transferase (mboat) family"/>
</dbReference>
<dbReference type="iPTMnet" id="O75908"/>
<dbReference type="PhosphoSitePlus" id="O75908"/>
<dbReference type="SwissPalm" id="O75908"/>
<dbReference type="BioMuta" id="SOAT2"/>
<dbReference type="jPOST" id="O75908"/>
<dbReference type="MassIVE" id="O75908"/>
<dbReference type="PaxDb" id="9606-ENSP00000301466"/>
<dbReference type="PeptideAtlas" id="O75908"/>
<dbReference type="ProteomicsDB" id="27608"/>
<dbReference type="ProteomicsDB" id="50258">
    <molecule id="O75908-1"/>
</dbReference>
<dbReference type="Antibodypedia" id="43294">
    <property type="antibodies" value="142 antibodies from 20 providers"/>
</dbReference>
<dbReference type="DNASU" id="8435"/>
<dbReference type="Ensembl" id="ENST00000301466.8">
    <molecule id="O75908-1"/>
    <property type="protein sequence ID" value="ENSP00000301466.3"/>
    <property type="gene ID" value="ENSG00000167780.12"/>
</dbReference>
<dbReference type="Ensembl" id="ENST00000542365.1">
    <molecule id="O75908-4"/>
    <property type="protein sequence ID" value="ENSP00000442234.1"/>
    <property type="gene ID" value="ENSG00000167780.12"/>
</dbReference>
<dbReference type="GeneID" id="8435"/>
<dbReference type="KEGG" id="hsa:8435"/>
<dbReference type="MANE-Select" id="ENST00000301466.8">
    <property type="protein sequence ID" value="ENSP00000301466.3"/>
    <property type="RefSeq nucleotide sequence ID" value="NM_003578.4"/>
    <property type="RefSeq protein sequence ID" value="NP_003569.1"/>
</dbReference>
<dbReference type="UCSC" id="uc001sbv.4">
    <molecule id="O75908-1"/>
    <property type="organism name" value="human"/>
</dbReference>
<dbReference type="AGR" id="HGNC:11178"/>
<dbReference type="CTD" id="8435"/>
<dbReference type="DisGeNET" id="8435"/>
<dbReference type="GeneCards" id="SOAT2"/>
<dbReference type="HGNC" id="HGNC:11178">
    <property type="gene designation" value="SOAT2"/>
</dbReference>
<dbReference type="HPA" id="ENSG00000167780">
    <property type="expression patterns" value="Tissue enriched (intestine)"/>
</dbReference>
<dbReference type="MIM" id="601311">
    <property type="type" value="gene"/>
</dbReference>
<dbReference type="neXtProt" id="NX_O75908"/>
<dbReference type="OpenTargets" id="ENSG00000167780"/>
<dbReference type="PharmGKB" id="PA36016"/>
<dbReference type="VEuPathDB" id="HostDB:ENSG00000167780"/>
<dbReference type="eggNOG" id="KOG0380">
    <property type="taxonomic scope" value="Eukaryota"/>
</dbReference>
<dbReference type="GeneTree" id="ENSGT00950000183081"/>
<dbReference type="HOGENOM" id="CLU_031845_1_0_1"/>
<dbReference type="InParanoid" id="O75908"/>
<dbReference type="OMA" id="TMNDRHT"/>
<dbReference type="OrthoDB" id="10039049at2759"/>
<dbReference type="PAN-GO" id="O75908">
    <property type="GO annotations" value="7 GO annotations based on evolutionary models"/>
</dbReference>
<dbReference type="PhylomeDB" id="O75908"/>
<dbReference type="TreeFam" id="TF315226"/>
<dbReference type="BioCyc" id="MetaCyc:HS09636-MONOMER"/>
<dbReference type="BRENDA" id="2.3.1.26">
    <property type="organism ID" value="2681"/>
</dbReference>
<dbReference type="PathwayCommons" id="O75908"/>
<dbReference type="Reactome" id="R-HSA-8964038">
    <property type="pathway name" value="LDL clearance"/>
</dbReference>
<dbReference type="SABIO-RK" id="O75908"/>
<dbReference type="SignaLink" id="O75908"/>
<dbReference type="BioGRID-ORCS" id="8435">
    <property type="hits" value="32 hits in 1148 CRISPR screens"/>
</dbReference>
<dbReference type="GeneWiki" id="SOAT2"/>
<dbReference type="GenomeRNAi" id="8435"/>
<dbReference type="Pharos" id="O75908">
    <property type="development level" value="Tchem"/>
</dbReference>
<dbReference type="PRO" id="PR:O75908"/>
<dbReference type="Proteomes" id="UP000005640">
    <property type="component" value="Chromosome 12"/>
</dbReference>
<dbReference type="RNAct" id="O75908">
    <property type="molecule type" value="protein"/>
</dbReference>
<dbReference type="Bgee" id="ENSG00000167780">
    <property type="expression patterns" value="Expressed in jejunal mucosa and 87 other cell types or tissues"/>
</dbReference>
<dbReference type="ExpressionAtlas" id="O75908">
    <property type="expression patterns" value="baseline and differential"/>
</dbReference>
<dbReference type="GO" id="GO:0005903">
    <property type="term" value="C:brush border"/>
    <property type="evidence" value="ECO:0000314"/>
    <property type="project" value="BHF-UCL"/>
</dbReference>
<dbReference type="GO" id="GO:0005783">
    <property type="term" value="C:endoplasmic reticulum"/>
    <property type="evidence" value="ECO:0000314"/>
    <property type="project" value="BHF-UCL"/>
</dbReference>
<dbReference type="GO" id="GO:0005789">
    <property type="term" value="C:endoplasmic reticulum membrane"/>
    <property type="evidence" value="ECO:0000314"/>
    <property type="project" value="BHF-UCL"/>
</dbReference>
<dbReference type="GO" id="GO:0016746">
    <property type="term" value="F:acyltransferase activity"/>
    <property type="evidence" value="ECO:0000304"/>
    <property type="project" value="ProtInc"/>
</dbReference>
<dbReference type="GO" id="GO:0015485">
    <property type="term" value="F:cholesterol binding"/>
    <property type="evidence" value="ECO:0000314"/>
    <property type="project" value="BHF-UCL"/>
</dbReference>
<dbReference type="GO" id="GO:0034736">
    <property type="term" value="F:cholesterol O-acyltransferase activity"/>
    <property type="evidence" value="ECO:0000314"/>
    <property type="project" value="BHF-UCL"/>
</dbReference>
<dbReference type="GO" id="GO:0000062">
    <property type="term" value="F:fatty-acyl-CoA binding"/>
    <property type="evidence" value="ECO:0000314"/>
    <property type="project" value="BHF-UCL"/>
</dbReference>
<dbReference type="GO" id="GO:0004772">
    <property type="term" value="F:sterol O-acyltransferase activity"/>
    <property type="evidence" value="ECO:0000314"/>
    <property type="project" value="UniProtKB"/>
</dbReference>
<dbReference type="GO" id="GO:0033344">
    <property type="term" value="P:cholesterol efflux"/>
    <property type="evidence" value="ECO:0000315"/>
    <property type="project" value="BHF-UCL"/>
</dbReference>
<dbReference type="GO" id="GO:0042632">
    <property type="term" value="P:cholesterol homeostasis"/>
    <property type="evidence" value="ECO:0000304"/>
    <property type="project" value="BHF-UCL"/>
</dbReference>
<dbReference type="GO" id="GO:0008203">
    <property type="term" value="P:cholesterol metabolic process"/>
    <property type="evidence" value="ECO:0000314"/>
    <property type="project" value="UniProtKB"/>
</dbReference>
<dbReference type="GO" id="GO:0010878">
    <property type="term" value="P:cholesterol storage"/>
    <property type="evidence" value="ECO:0007669"/>
    <property type="project" value="Ensembl"/>
</dbReference>
<dbReference type="GO" id="GO:0030299">
    <property type="term" value="P:intestinal cholesterol absorption"/>
    <property type="evidence" value="ECO:0000305"/>
    <property type="project" value="BHF-UCL"/>
</dbReference>
<dbReference type="GO" id="GO:0034383">
    <property type="term" value="P:low-density lipoprotein particle clearance"/>
    <property type="evidence" value="ECO:0000304"/>
    <property type="project" value="Reactome"/>
</dbReference>
<dbReference type="GO" id="GO:0010742">
    <property type="term" value="P:macrophage derived foam cell differentiation"/>
    <property type="evidence" value="ECO:0000304"/>
    <property type="project" value="BHF-UCL"/>
</dbReference>
<dbReference type="GO" id="GO:0034379">
    <property type="term" value="P:very-low-density lipoprotein particle assembly"/>
    <property type="evidence" value="ECO:0000315"/>
    <property type="project" value="BHF-UCL"/>
</dbReference>
<dbReference type="InterPro" id="IPR004299">
    <property type="entry name" value="MBOAT_fam"/>
</dbReference>
<dbReference type="InterPro" id="IPR014371">
    <property type="entry name" value="Oat_ACAT_DAG_ARE"/>
</dbReference>
<dbReference type="InterPro" id="IPR030687">
    <property type="entry name" value="Sterol_acyltranf_meta"/>
</dbReference>
<dbReference type="PANTHER" id="PTHR10408">
    <property type="entry name" value="STEROL O-ACYLTRANSFERASE"/>
    <property type="match status" value="1"/>
</dbReference>
<dbReference type="PANTHER" id="PTHR10408:SF10">
    <property type="entry name" value="STEROL O-ACYLTRANSFERASE 2"/>
    <property type="match status" value="1"/>
</dbReference>
<dbReference type="Pfam" id="PF03062">
    <property type="entry name" value="MBOAT"/>
    <property type="match status" value="1"/>
</dbReference>
<dbReference type="PIRSF" id="PIRSF000439">
    <property type="entry name" value="Oat_ACAT_DAG_ARE"/>
    <property type="match status" value="1"/>
</dbReference>
<dbReference type="PIRSF" id="PIRSF500230">
    <property type="entry name" value="Sterol_acyltranf_ACAT"/>
    <property type="match status" value="1"/>
</dbReference>
<accession>O75908</accession>
<accession>F5H7W4</accession>
<accession>I6L9H9</accession>
<accession>Q4VB99</accession>
<accession>Q4VBA1</accession>
<accession>Q96TD4</accession>
<accession>Q9UNR2</accession>